<comment type="function">
    <text evidence="1">Key enzyme in glycolysis that catalyzes the first step of the pathway by converting D-glyceraldehyde 3-phosphate (G3P) into 3-phospho-D-glyceroyl phosphate. Essential for the maintenance of cellular ATP levels and carbohydrate metabolism (By similarity).</text>
</comment>
<comment type="catalytic activity">
    <reaction evidence="2">
        <text>D-glyceraldehyde 3-phosphate + phosphate + NAD(+) = (2R)-3-phospho-glyceroyl phosphate + NADH + H(+)</text>
        <dbReference type="Rhea" id="RHEA:10300"/>
        <dbReference type="ChEBI" id="CHEBI:15378"/>
        <dbReference type="ChEBI" id="CHEBI:43474"/>
        <dbReference type="ChEBI" id="CHEBI:57540"/>
        <dbReference type="ChEBI" id="CHEBI:57604"/>
        <dbReference type="ChEBI" id="CHEBI:57945"/>
        <dbReference type="ChEBI" id="CHEBI:59776"/>
        <dbReference type="EC" id="1.2.1.12"/>
    </reaction>
</comment>
<comment type="pathway">
    <text>Carbohydrate degradation; glycolysis; pyruvate from D-glyceraldehyde 3-phosphate: step 1/5.</text>
</comment>
<comment type="subunit">
    <text evidence="1">Homotetramer.</text>
</comment>
<comment type="subcellular location">
    <subcellularLocation>
        <location evidence="1">Cytoplasm</location>
    </subcellularLocation>
</comment>
<comment type="miscellaneous">
    <text>Plants contain two types of GAPDH: cytosolic forms which participate in glycolysis and chloroplast forms which participate in photosynthesis. All the forms are encoded by distinct genes.</text>
</comment>
<comment type="similarity">
    <text evidence="3">Belongs to the glyceraldehyde-3-phosphate dehydrogenase family.</text>
</comment>
<evidence type="ECO:0000250" key="1"/>
<evidence type="ECO:0000255" key="2">
    <source>
        <dbReference type="PROSITE-ProRule" id="PRU10009"/>
    </source>
</evidence>
<evidence type="ECO:0000305" key="3"/>
<sequence length="340" mass="36769">MSSTGKIKIGINGFGRIGRLVARVALLRDDIELVAVNDPFISTDYMTYMFKYDSVHGQWKKHEVKVKDSNTLLFGEKAVTVFGCRNPEEIPWGETGVEYVVESTGVFTDKEKAAAHIKGGAKKVVITAPSKDAPMFVVGVNEHEYKPDLAIVSNASCTTNCLAPLAKVINDRFGIVEGLMTTVHSITATQKTVDGPSNKDWRGGRGAGFNIIPSSTGAAKAVGKVLPALNGKLTGMAFRVPTPDVSVVDLTVRLEKPASYDEIKAAIKEESEGKLKGILGYTEDDVVSTDFIGDNRSSIFDAKAGIALSDNFVKLVSWYDNEWGYSSRVIDLIVHMASTV</sequence>
<name>G3PC_GINBI</name>
<reference key="1">
    <citation type="journal article" date="1994" name="J. Mol. Evol.">
        <title>Nucleotide distribution in gymnosperm nuclear sequences suggests a model for GC-content change in land-plant nuclear genomes.</title>
        <authorList>
            <person name="Jansson S."/>
            <person name="Meyer-Gauen G."/>
            <person name="Cerff R."/>
            <person name="Martin W."/>
        </authorList>
    </citation>
    <scope>NUCLEOTIDE SEQUENCE [MRNA]</scope>
    <source>
        <tissue>Seed</tissue>
    </source>
</reference>
<keyword id="KW-0963">Cytoplasm</keyword>
<keyword id="KW-0324">Glycolysis</keyword>
<keyword id="KW-0520">NAD</keyword>
<keyword id="KW-0560">Oxidoreductase</keyword>
<feature type="chain" id="PRO_0000145600" description="Glyceraldehyde-3-phosphate dehydrogenase, cytosolic">
    <location>
        <begin position="1"/>
        <end position="340"/>
    </location>
</feature>
<feature type="active site" description="Nucleophile" evidence="2">
    <location>
        <position position="157"/>
    </location>
</feature>
<feature type="binding site" evidence="1">
    <location>
        <begin position="16"/>
        <end position="17"/>
    </location>
    <ligand>
        <name>NAD(+)</name>
        <dbReference type="ChEBI" id="CHEBI:57540"/>
    </ligand>
</feature>
<feature type="binding site" evidence="1">
    <location>
        <position position="38"/>
    </location>
    <ligand>
        <name>NAD(+)</name>
        <dbReference type="ChEBI" id="CHEBI:57540"/>
    </ligand>
</feature>
<feature type="binding site" evidence="1">
    <location>
        <position position="85"/>
    </location>
    <ligand>
        <name>NAD(+)</name>
        <dbReference type="ChEBI" id="CHEBI:57540"/>
    </ligand>
</feature>
<feature type="binding site" evidence="1">
    <location>
        <begin position="156"/>
        <end position="158"/>
    </location>
    <ligand>
        <name>D-glyceraldehyde 3-phosphate</name>
        <dbReference type="ChEBI" id="CHEBI:59776"/>
    </ligand>
</feature>
<feature type="binding site" evidence="1">
    <location>
        <position position="187"/>
    </location>
    <ligand>
        <name>D-glyceraldehyde 3-phosphate</name>
        <dbReference type="ChEBI" id="CHEBI:59776"/>
    </ligand>
</feature>
<feature type="binding site" evidence="1">
    <location>
        <begin position="216"/>
        <end position="217"/>
    </location>
    <ligand>
        <name>D-glyceraldehyde 3-phosphate</name>
        <dbReference type="ChEBI" id="CHEBI:59776"/>
    </ligand>
</feature>
<feature type="binding site" evidence="1">
    <location>
        <position position="239"/>
    </location>
    <ligand>
        <name>D-glyceraldehyde 3-phosphate</name>
        <dbReference type="ChEBI" id="CHEBI:59776"/>
    </ligand>
</feature>
<feature type="binding site" evidence="1">
    <location>
        <position position="321"/>
    </location>
    <ligand>
        <name>NAD(+)</name>
        <dbReference type="ChEBI" id="CHEBI:57540"/>
    </ligand>
</feature>
<feature type="site" description="Activates thiol group during catalysis" evidence="1">
    <location>
        <position position="184"/>
    </location>
</feature>
<dbReference type="EC" id="1.2.1.12"/>
<dbReference type="EMBL" id="L26924">
    <property type="protein sequence ID" value="AAA33352.1"/>
    <property type="molecule type" value="mRNA"/>
</dbReference>
<dbReference type="SMR" id="Q39769"/>
<dbReference type="OMA" id="IRHMAST"/>
<dbReference type="UniPathway" id="UPA00109">
    <property type="reaction ID" value="UER00184"/>
</dbReference>
<dbReference type="GO" id="GO:0005829">
    <property type="term" value="C:cytosol"/>
    <property type="evidence" value="ECO:0007669"/>
    <property type="project" value="TreeGrafter"/>
</dbReference>
<dbReference type="GO" id="GO:0004365">
    <property type="term" value="F:glyceraldehyde-3-phosphate dehydrogenase (NAD+) (phosphorylating) activity"/>
    <property type="evidence" value="ECO:0007669"/>
    <property type="project" value="UniProtKB-EC"/>
</dbReference>
<dbReference type="GO" id="GO:0051287">
    <property type="term" value="F:NAD binding"/>
    <property type="evidence" value="ECO:0007669"/>
    <property type="project" value="InterPro"/>
</dbReference>
<dbReference type="GO" id="GO:0050661">
    <property type="term" value="F:NADP binding"/>
    <property type="evidence" value="ECO:0007669"/>
    <property type="project" value="InterPro"/>
</dbReference>
<dbReference type="GO" id="GO:0006006">
    <property type="term" value="P:glucose metabolic process"/>
    <property type="evidence" value="ECO:0007669"/>
    <property type="project" value="InterPro"/>
</dbReference>
<dbReference type="GO" id="GO:0006096">
    <property type="term" value="P:glycolytic process"/>
    <property type="evidence" value="ECO:0007669"/>
    <property type="project" value="UniProtKB-UniPathway"/>
</dbReference>
<dbReference type="CDD" id="cd18126">
    <property type="entry name" value="GAPDH_I_C"/>
    <property type="match status" value="1"/>
</dbReference>
<dbReference type="CDD" id="cd05214">
    <property type="entry name" value="GAPDH_I_N"/>
    <property type="match status" value="1"/>
</dbReference>
<dbReference type="FunFam" id="3.30.360.10:FF:000001">
    <property type="entry name" value="Glyceraldehyde-3-phosphate dehydrogenase"/>
    <property type="match status" value="1"/>
</dbReference>
<dbReference type="FunFam" id="3.40.50.720:FF:000020">
    <property type="entry name" value="Glyceraldehyde-3-phosphate dehydrogenase"/>
    <property type="match status" value="1"/>
</dbReference>
<dbReference type="Gene3D" id="3.30.360.10">
    <property type="entry name" value="Dihydrodipicolinate Reductase, domain 2"/>
    <property type="match status" value="1"/>
</dbReference>
<dbReference type="Gene3D" id="3.40.50.720">
    <property type="entry name" value="NAD(P)-binding Rossmann-like Domain"/>
    <property type="match status" value="1"/>
</dbReference>
<dbReference type="InterPro" id="IPR020831">
    <property type="entry name" value="GlycerAld/Erythrose_P_DH"/>
</dbReference>
<dbReference type="InterPro" id="IPR020830">
    <property type="entry name" value="GlycerAld_3-P_DH_AS"/>
</dbReference>
<dbReference type="InterPro" id="IPR020829">
    <property type="entry name" value="GlycerAld_3-P_DH_cat"/>
</dbReference>
<dbReference type="InterPro" id="IPR020828">
    <property type="entry name" value="GlycerAld_3-P_DH_NAD(P)-bd"/>
</dbReference>
<dbReference type="InterPro" id="IPR006424">
    <property type="entry name" value="Glyceraldehyde-3-P_DH_1"/>
</dbReference>
<dbReference type="InterPro" id="IPR036291">
    <property type="entry name" value="NAD(P)-bd_dom_sf"/>
</dbReference>
<dbReference type="NCBIfam" id="TIGR01534">
    <property type="entry name" value="GAPDH-I"/>
    <property type="match status" value="1"/>
</dbReference>
<dbReference type="PANTHER" id="PTHR10836">
    <property type="entry name" value="GLYCERALDEHYDE 3-PHOSPHATE DEHYDROGENASE"/>
    <property type="match status" value="1"/>
</dbReference>
<dbReference type="PANTHER" id="PTHR10836:SF112">
    <property type="entry name" value="GLYCERALDEHYDE-3-PHOSPHATE DEHYDROGENASE GAPC1, CYTOSOLIC-RELATED"/>
    <property type="match status" value="1"/>
</dbReference>
<dbReference type="Pfam" id="PF02800">
    <property type="entry name" value="Gp_dh_C"/>
    <property type="match status" value="1"/>
</dbReference>
<dbReference type="Pfam" id="PF00044">
    <property type="entry name" value="Gp_dh_N"/>
    <property type="match status" value="1"/>
</dbReference>
<dbReference type="PIRSF" id="PIRSF000149">
    <property type="entry name" value="GAP_DH"/>
    <property type="match status" value="1"/>
</dbReference>
<dbReference type="PRINTS" id="PR00078">
    <property type="entry name" value="G3PDHDRGNASE"/>
</dbReference>
<dbReference type="SMART" id="SM00846">
    <property type="entry name" value="Gp_dh_N"/>
    <property type="match status" value="1"/>
</dbReference>
<dbReference type="SUPFAM" id="SSF55347">
    <property type="entry name" value="Glyceraldehyde-3-phosphate dehydrogenase-like, C-terminal domain"/>
    <property type="match status" value="1"/>
</dbReference>
<dbReference type="SUPFAM" id="SSF51735">
    <property type="entry name" value="NAD(P)-binding Rossmann-fold domains"/>
    <property type="match status" value="1"/>
</dbReference>
<dbReference type="PROSITE" id="PS00071">
    <property type="entry name" value="GAPDH"/>
    <property type="match status" value="1"/>
</dbReference>
<accession>Q39769</accession>
<protein>
    <recommendedName>
        <fullName>Glyceraldehyde-3-phosphate dehydrogenase, cytosolic</fullName>
        <ecNumber>1.2.1.12</ecNumber>
    </recommendedName>
</protein>
<organism>
    <name type="scientific">Ginkgo biloba</name>
    <name type="common">Ginkgo</name>
    <name type="synonym">Maidenhair tree</name>
    <dbReference type="NCBI Taxonomy" id="3311"/>
    <lineage>
        <taxon>Eukaryota</taxon>
        <taxon>Viridiplantae</taxon>
        <taxon>Streptophyta</taxon>
        <taxon>Embryophyta</taxon>
        <taxon>Tracheophyta</taxon>
        <taxon>Spermatophyta</taxon>
        <taxon>Ginkgoidae</taxon>
        <taxon>Ginkgoales</taxon>
        <taxon>Ginkgoaceae</taxon>
        <taxon>Ginkgo</taxon>
    </lineage>
</organism>
<proteinExistence type="evidence at transcript level"/>